<gene>
    <name evidence="1" type="primary">dapE2</name>
    <name type="ordered locus">Shew_2793</name>
</gene>
<reference key="1">
    <citation type="submission" date="2007-03" db="EMBL/GenBank/DDBJ databases">
        <title>Complete sequence of Shewanella loihica PV-4.</title>
        <authorList>
            <consortium name="US DOE Joint Genome Institute"/>
            <person name="Copeland A."/>
            <person name="Lucas S."/>
            <person name="Lapidus A."/>
            <person name="Barry K."/>
            <person name="Detter J.C."/>
            <person name="Glavina del Rio T."/>
            <person name="Hammon N."/>
            <person name="Israni S."/>
            <person name="Dalin E."/>
            <person name="Tice H."/>
            <person name="Pitluck S."/>
            <person name="Chain P."/>
            <person name="Malfatti S."/>
            <person name="Shin M."/>
            <person name="Vergez L."/>
            <person name="Schmutz J."/>
            <person name="Larimer F."/>
            <person name="Land M."/>
            <person name="Hauser L."/>
            <person name="Kyrpides N."/>
            <person name="Mikhailova N."/>
            <person name="Romine M.F."/>
            <person name="Serres G."/>
            <person name="Fredrickson J."/>
            <person name="Tiedje J."/>
            <person name="Richardson P."/>
        </authorList>
    </citation>
    <scope>NUCLEOTIDE SEQUENCE [LARGE SCALE GENOMIC DNA]</scope>
    <source>
        <strain>ATCC BAA-1088 / PV-4</strain>
    </source>
</reference>
<name>DAPE2_SHELP</name>
<comment type="function">
    <text evidence="1">Catalyzes the hydrolysis of N-succinyl-L,L-diaminopimelic acid (SDAP), forming succinate and LL-2,6-diaminopimelate (DAP), an intermediate involved in the bacterial biosynthesis of lysine and meso-diaminopimelic acid, an essential component of bacterial cell walls.</text>
</comment>
<comment type="catalytic activity">
    <reaction evidence="1">
        <text>N-succinyl-(2S,6S)-2,6-diaminopimelate + H2O = (2S,6S)-2,6-diaminopimelate + succinate</text>
        <dbReference type="Rhea" id="RHEA:22608"/>
        <dbReference type="ChEBI" id="CHEBI:15377"/>
        <dbReference type="ChEBI" id="CHEBI:30031"/>
        <dbReference type="ChEBI" id="CHEBI:57609"/>
        <dbReference type="ChEBI" id="CHEBI:58087"/>
        <dbReference type="EC" id="3.5.1.18"/>
    </reaction>
</comment>
<comment type="cofactor">
    <cofactor evidence="1">
        <name>Zn(2+)</name>
        <dbReference type="ChEBI" id="CHEBI:29105"/>
    </cofactor>
    <cofactor evidence="1">
        <name>Co(2+)</name>
        <dbReference type="ChEBI" id="CHEBI:48828"/>
    </cofactor>
    <text evidence="1">Binds 2 Zn(2+) or Co(2+) ions per subunit.</text>
</comment>
<comment type="pathway">
    <text evidence="1">Amino-acid biosynthesis; L-lysine biosynthesis via DAP pathway; LL-2,6-diaminopimelate from (S)-tetrahydrodipicolinate (succinylase route): step 3/3.</text>
</comment>
<comment type="subunit">
    <text evidence="1">Homodimer.</text>
</comment>
<comment type="similarity">
    <text evidence="1">Belongs to the peptidase M20A family. DapE subfamily.</text>
</comment>
<keyword id="KW-0028">Amino-acid biosynthesis</keyword>
<keyword id="KW-0170">Cobalt</keyword>
<keyword id="KW-0220">Diaminopimelate biosynthesis</keyword>
<keyword id="KW-0378">Hydrolase</keyword>
<keyword id="KW-0457">Lysine biosynthesis</keyword>
<keyword id="KW-0479">Metal-binding</keyword>
<keyword id="KW-1185">Reference proteome</keyword>
<keyword id="KW-0862">Zinc</keyword>
<feature type="chain" id="PRO_0000375734" description="Succinyl-diaminopimelate desuccinylase 2">
    <location>
        <begin position="1"/>
        <end position="377"/>
    </location>
</feature>
<feature type="active site" evidence="1">
    <location>
        <position position="64"/>
    </location>
</feature>
<feature type="active site" description="Proton acceptor" evidence="1">
    <location>
        <position position="129"/>
    </location>
</feature>
<feature type="binding site" evidence="1">
    <location>
        <position position="62"/>
    </location>
    <ligand>
        <name>Zn(2+)</name>
        <dbReference type="ChEBI" id="CHEBI:29105"/>
        <label>1</label>
    </ligand>
</feature>
<feature type="binding site" evidence="1">
    <location>
        <position position="95"/>
    </location>
    <ligand>
        <name>Zn(2+)</name>
        <dbReference type="ChEBI" id="CHEBI:29105"/>
        <label>1</label>
    </ligand>
</feature>
<feature type="binding site" evidence="1">
    <location>
        <position position="95"/>
    </location>
    <ligand>
        <name>Zn(2+)</name>
        <dbReference type="ChEBI" id="CHEBI:29105"/>
        <label>2</label>
    </ligand>
</feature>
<feature type="binding site" evidence="1">
    <location>
        <position position="130"/>
    </location>
    <ligand>
        <name>Zn(2+)</name>
        <dbReference type="ChEBI" id="CHEBI:29105"/>
        <label>2</label>
    </ligand>
</feature>
<feature type="binding site" evidence="1">
    <location>
        <position position="158"/>
    </location>
    <ligand>
        <name>Zn(2+)</name>
        <dbReference type="ChEBI" id="CHEBI:29105"/>
        <label>1</label>
    </ligand>
</feature>
<feature type="binding site" evidence="1">
    <location>
        <position position="350"/>
    </location>
    <ligand>
        <name>Zn(2+)</name>
        <dbReference type="ChEBI" id="CHEBI:29105"/>
        <label>2</label>
    </ligand>
</feature>
<proteinExistence type="inferred from homology"/>
<organism>
    <name type="scientific">Shewanella loihica (strain ATCC BAA-1088 / PV-4)</name>
    <dbReference type="NCBI Taxonomy" id="323850"/>
    <lineage>
        <taxon>Bacteria</taxon>
        <taxon>Pseudomonadati</taxon>
        <taxon>Pseudomonadota</taxon>
        <taxon>Gammaproteobacteria</taxon>
        <taxon>Alteromonadales</taxon>
        <taxon>Shewanellaceae</taxon>
        <taxon>Shewanella</taxon>
    </lineage>
</organism>
<accession>A3QGR1</accession>
<sequence>MRYCRELMRRPSITPEDAGCQQWLGERLVAMGFDVSHYQDKGVSNLLASFDERPAQLALAGHTDVVPPGDLSRWQTPPFAATLVDGMLIGRGAVDMKSGLAVMLAAVEDHIACYGLPKANWQFIVTSDEEGEAEHGTRTLVERLKAQSRLPKYCVVAEPTADKQAGDVIKIGRRGAISARLTLKGKQGHVAYPKNAVNALHMAARVMQALEALIWDEGSDDFPGTSLQVTHVDSGAFTDNIVPGSCEICFNIRYSYRYSEAGIMARIQACLDGLSLGEDAISLRWERGCQPYHTQENDEQSLIAQVEAAIFEVTASFPRLSTSGGTSDGRFLSSPQTQVIELGLPNRTIHQVNERVELAQIVRLYRIYRALLTRFHD</sequence>
<dbReference type="EC" id="3.5.1.18" evidence="1"/>
<dbReference type="EMBL" id="CP000606">
    <property type="protein sequence ID" value="ABO24659.1"/>
    <property type="molecule type" value="Genomic_DNA"/>
</dbReference>
<dbReference type="SMR" id="A3QGR1"/>
<dbReference type="STRING" id="323850.Shew_2793"/>
<dbReference type="KEGG" id="slo:Shew_2793"/>
<dbReference type="eggNOG" id="COG0624">
    <property type="taxonomic scope" value="Bacteria"/>
</dbReference>
<dbReference type="HOGENOM" id="CLU_021802_4_0_6"/>
<dbReference type="UniPathway" id="UPA00034">
    <property type="reaction ID" value="UER00021"/>
</dbReference>
<dbReference type="Proteomes" id="UP000001558">
    <property type="component" value="Chromosome"/>
</dbReference>
<dbReference type="GO" id="GO:0008777">
    <property type="term" value="F:acetylornithine deacetylase activity"/>
    <property type="evidence" value="ECO:0007669"/>
    <property type="project" value="TreeGrafter"/>
</dbReference>
<dbReference type="GO" id="GO:0050897">
    <property type="term" value="F:cobalt ion binding"/>
    <property type="evidence" value="ECO:0007669"/>
    <property type="project" value="UniProtKB-UniRule"/>
</dbReference>
<dbReference type="GO" id="GO:0009014">
    <property type="term" value="F:succinyl-diaminopimelate desuccinylase activity"/>
    <property type="evidence" value="ECO:0007669"/>
    <property type="project" value="UniProtKB-UniRule"/>
</dbReference>
<dbReference type="GO" id="GO:0008270">
    <property type="term" value="F:zinc ion binding"/>
    <property type="evidence" value="ECO:0007669"/>
    <property type="project" value="UniProtKB-UniRule"/>
</dbReference>
<dbReference type="GO" id="GO:0019877">
    <property type="term" value="P:diaminopimelate biosynthetic process"/>
    <property type="evidence" value="ECO:0007669"/>
    <property type="project" value="UniProtKB-UniRule"/>
</dbReference>
<dbReference type="GO" id="GO:0006526">
    <property type="term" value="P:L-arginine biosynthetic process"/>
    <property type="evidence" value="ECO:0007669"/>
    <property type="project" value="TreeGrafter"/>
</dbReference>
<dbReference type="GO" id="GO:0009089">
    <property type="term" value="P:lysine biosynthetic process via diaminopimelate"/>
    <property type="evidence" value="ECO:0007669"/>
    <property type="project" value="UniProtKB-UniRule"/>
</dbReference>
<dbReference type="CDD" id="cd03891">
    <property type="entry name" value="M20_DapE_proteobac"/>
    <property type="match status" value="1"/>
</dbReference>
<dbReference type="Gene3D" id="3.30.70.360">
    <property type="match status" value="1"/>
</dbReference>
<dbReference type="Gene3D" id="3.40.630.10">
    <property type="entry name" value="Zn peptidases"/>
    <property type="match status" value="2"/>
</dbReference>
<dbReference type="HAMAP" id="MF_01690">
    <property type="entry name" value="DapE"/>
    <property type="match status" value="1"/>
</dbReference>
<dbReference type="InterPro" id="IPR001261">
    <property type="entry name" value="ArgE/DapE_CS"/>
</dbReference>
<dbReference type="InterPro" id="IPR036264">
    <property type="entry name" value="Bact_exopeptidase_dim_dom"/>
</dbReference>
<dbReference type="InterPro" id="IPR005941">
    <property type="entry name" value="DapE_proteobac"/>
</dbReference>
<dbReference type="InterPro" id="IPR002933">
    <property type="entry name" value="Peptidase_M20"/>
</dbReference>
<dbReference type="InterPro" id="IPR011650">
    <property type="entry name" value="Peptidase_M20_dimer"/>
</dbReference>
<dbReference type="InterPro" id="IPR050072">
    <property type="entry name" value="Peptidase_M20A"/>
</dbReference>
<dbReference type="NCBIfam" id="TIGR01246">
    <property type="entry name" value="dapE_proteo"/>
    <property type="match status" value="1"/>
</dbReference>
<dbReference type="NCBIfam" id="NF009557">
    <property type="entry name" value="PRK13009.1"/>
    <property type="match status" value="1"/>
</dbReference>
<dbReference type="PANTHER" id="PTHR43808">
    <property type="entry name" value="ACETYLORNITHINE DEACETYLASE"/>
    <property type="match status" value="1"/>
</dbReference>
<dbReference type="PANTHER" id="PTHR43808:SF31">
    <property type="entry name" value="N-ACETYL-L-CITRULLINE DEACETYLASE"/>
    <property type="match status" value="1"/>
</dbReference>
<dbReference type="Pfam" id="PF07687">
    <property type="entry name" value="M20_dimer"/>
    <property type="match status" value="1"/>
</dbReference>
<dbReference type="Pfam" id="PF01546">
    <property type="entry name" value="Peptidase_M20"/>
    <property type="match status" value="1"/>
</dbReference>
<dbReference type="SUPFAM" id="SSF55031">
    <property type="entry name" value="Bacterial exopeptidase dimerisation domain"/>
    <property type="match status" value="1"/>
</dbReference>
<dbReference type="SUPFAM" id="SSF53187">
    <property type="entry name" value="Zn-dependent exopeptidases"/>
    <property type="match status" value="1"/>
</dbReference>
<dbReference type="PROSITE" id="PS00758">
    <property type="entry name" value="ARGE_DAPE_CPG2_1"/>
    <property type="match status" value="1"/>
</dbReference>
<protein>
    <recommendedName>
        <fullName evidence="1">Succinyl-diaminopimelate desuccinylase 2</fullName>
        <shortName evidence="1">SDAP desuccinylase 2</shortName>
        <ecNumber evidence="1">3.5.1.18</ecNumber>
    </recommendedName>
    <alternativeName>
        <fullName evidence="1">N-succinyl-LL-2,6-diaminoheptanedioate amidohydrolase 2</fullName>
    </alternativeName>
</protein>
<evidence type="ECO:0000255" key="1">
    <source>
        <dbReference type="HAMAP-Rule" id="MF_01690"/>
    </source>
</evidence>